<sequence>MNYPEPIAKLIESYMKLPGIGQKTATRLAFYTIDMKEEDANAFAKALISVKRDLHFCSICGNITEEDPCEICQDKNRDRSIILVVEEPKDVMSMEKMREYQGLYHVLHGVLSPMEGTGPEDINIASLIKRLHDDEVKEVIIATNATTEGEATAMYLSRLIKPAGITVTRLAHGLSVGSDIEYADEITLLKAVEGRREI</sequence>
<proteinExistence type="inferred from homology"/>
<feature type="chain" id="PRO_0000190319" description="Recombination protein RecR">
    <location>
        <begin position="1"/>
        <end position="198"/>
    </location>
</feature>
<feature type="domain" description="Toprim" evidence="1">
    <location>
        <begin position="80"/>
        <end position="175"/>
    </location>
</feature>
<feature type="zinc finger region" description="C4-type" evidence="1">
    <location>
        <begin position="57"/>
        <end position="72"/>
    </location>
</feature>
<dbReference type="EMBL" id="AE016830">
    <property type="protein sequence ID" value="AAO82464.1"/>
    <property type="molecule type" value="Genomic_DNA"/>
</dbReference>
<dbReference type="RefSeq" id="NP_816394.1">
    <property type="nucleotide sequence ID" value="NC_004668.1"/>
</dbReference>
<dbReference type="RefSeq" id="WP_002387203.1">
    <property type="nucleotide sequence ID" value="NZ_KE136528.1"/>
</dbReference>
<dbReference type="SMR" id="Q830L4"/>
<dbReference type="STRING" id="226185.EF_2766"/>
<dbReference type="EnsemblBacteria" id="AAO82464">
    <property type="protein sequence ID" value="AAO82464"/>
    <property type="gene ID" value="EF_2766"/>
</dbReference>
<dbReference type="KEGG" id="efa:EF2766"/>
<dbReference type="PATRIC" id="fig|226185.45.peg.804"/>
<dbReference type="eggNOG" id="COG0353">
    <property type="taxonomic scope" value="Bacteria"/>
</dbReference>
<dbReference type="HOGENOM" id="CLU_060739_1_0_9"/>
<dbReference type="Proteomes" id="UP000001415">
    <property type="component" value="Chromosome"/>
</dbReference>
<dbReference type="GO" id="GO:0003677">
    <property type="term" value="F:DNA binding"/>
    <property type="evidence" value="ECO:0007669"/>
    <property type="project" value="UniProtKB-UniRule"/>
</dbReference>
<dbReference type="GO" id="GO:0008270">
    <property type="term" value="F:zinc ion binding"/>
    <property type="evidence" value="ECO:0007669"/>
    <property type="project" value="UniProtKB-KW"/>
</dbReference>
<dbReference type="GO" id="GO:0006310">
    <property type="term" value="P:DNA recombination"/>
    <property type="evidence" value="ECO:0007669"/>
    <property type="project" value="UniProtKB-UniRule"/>
</dbReference>
<dbReference type="GO" id="GO:0006281">
    <property type="term" value="P:DNA repair"/>
    <property type="evidence" value="ECO:0007669"/>
    <property type="project" value="UniProtKB-UniRule"/>
</dbReference>
<dbReference type="CDD" id="cd01025">
    <property type="entry name" value="TOPRIM_recR"/>
    <property type="match status" value="1"/>
</dbReference>
<dbReference type="Gene3D" id="3.30.60.80">
    <property type="match status" value="1"/>
</dbReference>
<dbReference type="Gene3D" id="3.40.1360.10">
    <property type="match status" value="1"/>
</dbReference>
<dbReference type="Gene3D" id="6.10.250.240">
    <property type="match status" value="1"/>
</dbReference>
<dbReference type="Gene3D" id="1.10.8.420">
    <property type="entry name" value="RecR Domain 1"/>
    <property type="match status" value="1"/>
</dbReference>
<dbReference type="HAMAP" id="MF_00017">
    <property type="entry name" value="RecR"/>
    <property type="match status" value="1"/>
</dbReference>
<dbReference type="InterPro" id="IPR000093">
    <property type="entry name" value="DNA_Rcmb_RecR"/>
</dbReference>
<dbReference type="InterPro" id="IPR023627">
    <property type="entry name" value="Rcmb_RecR"/>
</dbReference>
<dbReference type="InterPro" id="IPR015967">
    <property type="entry name" value="Rcmb_RecR_Znf"/>
</dbReference>
<dbReference type="InterPro" id="IPR006171">
    <property type="entry name" value="TOPRIM_dom"/>
</dbReference>
<dbReference type="InterPro" id="IPR034137">
    <property type="entry name" value="TOPRIM_RecR"/>
</dbReference>
<dbReference type="NCBIfam" id="TIGR00615">
    <property type="entry name" value="recR"/>
    <property type="match status" value="1"/>
</dbReference>
<dbReference type="PANTHER" id="PTHR30446">
    <property type="entry name" value="RECOMBINATION PROTEIN RECR"/>
    <property type="match status" value="1"/>
</dbReference>
<dbReference type="PANTHER" id="PTHR30446:SF0">
    <property type="entry name" value="RECOMBINATION PROTEIN RECR"/>
    <property type="match status" value="1"/>
</dbReference>
<dbReference type="Pfam" id="PF21175">
    <property type="entry name" value="RecR_C"/>
    <property type="match status" value="1"/>
</dbReference>
<dbReference type="Pfam" id="PF21176">
    <property type="entry name" value="RecR_HhH"/>
    <property type="match status" value="1"/>
</dbReference>
<dbReference type="Pfam" id="PF02132">
    <property type="entry name" value="RecR_ZnF"/>
    <property type="match status" value="1"/>
</dbReference>
<dbReference type="Pfam" id="PF13662">
    <property type="entry name" value="Toprim_4"/>
    <property type="match status" value="1"/>
</dbReference>
<dbReference type="SMART" id="SM00493">
    <property type="entry name" value="TOPRIM"/>
    <property type="match status" value="1"/>
</dbReference>
<dbReference type="SUPFAM" id="SSF111304">
    <property type="entry name" value="Recombination protein RecR"/>
    <property type="match status" value="1"/>
</dbReference>
<dbReference type="PROSITE" id="PS01300">
    <property type="entry name" value="RECR"/>
    <property type="match status" value="1"/>
</dbReference>
<dbReference type="PROSITE" id="PS50880">
    <property type="entry name" value="TOPRIM"/>
    <property type="match status" value="1"/>
</dbReference>
<evidence type="ECO:0000255" key="1">
    <source>
        <dbReference type="HAMAP-Rule" id="MF_00017"/>
    </source>
</evidence>
<gene>
    <name evidence="1" type="primary">recR</name>
    <name type="ordered locus">EF_2766</name>
</gene>
<name>RECR_ENTFA</name>
<protein>
    <recommendedName>
        <fullName evidence="1">Recombination protein RecR</fullName>
    </recommendedName>
</protein>
<reference key="1">
    <citation type="journal article" date="2003" name="Science">
        <title>Role of mobile DNA in the evolution of vancomycin-resistant Enterococcus faecalis.</title>
        <authorList>
            <person name="Paulsen I.T."/>
            <person name="Banerjei L."/>
            <person name="Myers G.S.A."/>
            <person name="Nelson K.E."/>
            <person name="Seshadri R."/>
            <person name="Read T.D."/>
            <person name="Fouts D.E."/>
            <person name="Eisen J.A."/>
            <person name="Gill S.R."/>
            <person name="Heidelberg J.F."/>
            <person name="Tettelin H."/>
            <person name="Dodson R.J."/>
            <person name="Umayam L.A."/>
            <person name="Brinkac L.M."/>
            <person name="Beanan M.J."/>
            <person name="Daugherty S.C."/>
            <person name="DeBoy R.T."/>
            <person name="Durkin S.A."/>
            <person name="Kolonay J.F."/>
            <person name="Madupu R."/>
            <person name="Nelson W.C."/>
            <person name="Vamathevan J.J."/>
            <person name="Tran B."/>
            <person name="Upton J."/>
            <person name="Hansen T."/>
            <person name="Shetty J."/>
            <person name="Khouri H.M."/>
            <person name="Utterback T.R."/>
            <person name="Radune D."/>
            <person name="Ketchum K.A."/>
            <person name="Dougherty B.A."/>
            <person name="Fraser C.M."/>
        </authorList>
    </citation>
    <scope>NUCLEOTIDE SEQUENCE [LARGE SCALE GENOMIC DNA]</scope>
    <source>
        <strain>ATCC 700802 / V583</strain>
    </source>
</reference>
<organism>
    <name type="scientific">Enterococcus faecalis (strain ATCC 700802 / V583)</name>
    <dbReference type="NCBI Taxonomy" id="226185"/>
    <lineage>
        <taxon>Bacteria</taxon>
        <taxon>Bacillati</taxon>
        <taxon>Bacillota</taxon>
        <taxon>Bacilli</taxon>
        <taxon>Lactobacillales</taxon>
        <taxon>Enterococcaceae</taxon>
        <taxon>Enterococcus</taxon>
    </lineage>
</organism>
<keyword id="KW-0227">DNA damage</keyword>
<keyword id="KW-0233">DNA recombination</keyword>
<keyword id="KW-0234">DNA repair</keyword>
<keyword id="KW-0479">Metal-binding</keyword>
<keyword id="KW-1185">Reference proteome</keyword>
<keyword id="KW-0862">Zinc</keyword>
<keyword id="KW-0863">Zinc-finger</keyword>
<comment type="function">
    <text evidence="1">May play a role in DNA repair. It seems to be involved in an RecBC-independent recombinational process of DNA repair. It may act with RecF and RecO.</text>
</comment>
<comment type="similarity">
    <text evidence="1">Belongs to the RecR family.</text>
</comment>
<accession>Q830L4</accession>